<evidence type="ECO:0000255" key="1">
    <source>
        <dbReference type="HAMAP-Rule" id="MF_01207"/>
    </source>
</evidence>
<feature type="chain" id="PRO_1000138744" description="Protein-methionine-sulfoxide reductase heme-binding subunit MsrQ">
    <location>
        <begin position="1"/>
        <end position="199"/>
    </location>
</feature>
<feature type="transmembrane region" description="Helical" evidence="1">
    <location>
        <begin position="10"/>
        <end position="30"/>
    </location>
</feature>
<feature type="transmembrane region" description="Helical" evidence="1">
    <location>
        <begin position="82"/>
        <end position="102"/>
    </location>
</feature>
<feature type="transmembrane region" description="Helical" evidence="1">
    <location>
        <begin position="116"/>
        <end position="136"/>
    </location>
</feature>
<feature type="transmembrane region" description="Helical" evidence="1">
    <location>
        <begin position="153"/>
        <end position="173"/>
    </location>
</feature>
<accession>B4TJV2</accession>
<organism>
    <name type="scientific">Salmonella heidelberg (strain SL476)</name>
    <dbReference type="NCBI Taxonomy" id="454169"/>
    <lineage>
        <taxon>Bacteria</taxon>
        <taxon>Pseudomonadati</taxon>
        <taxon>Pseudomonadota</taxon>
        <taxon>Gammaproteobacteria</taxon>
        <taxon>Enterobacterales</taxon>
        <taxon>Enterobacteriaceae</taxon>
        <taxon>Salmonella</taxon>
    </lineage>
</organism>
<reference key="1">
    <citation type="journal article" date="2011" name="J. Bacteriol.">
        <title>Comparative genomics of 28 Salmonella enterica isolates: evidence for CRISPR-mediated adaptive sublineage evolution.</title>
        <authorList>
            <person name="Fricke W.F."/>
            <person name="Mammel M.K."/>
            <person name="McDermott P.F."/>
            <person name="Tartera C."/>
            <person name="White D.G."/>
            <person name="Leclerc J.E."/>
            <person name="Ravel J."/>
            <person name="Cebula T.A."/>
        </authorList>
    </citation>
    <scope>NUCLEOTIDE SEQUENCE [LARGE SCALE GENOMIC DNA]</scope>
    <source>
        <strain>SL476</strain>
    </source>
</reference>
<sequence>MRLTAKQITWLKVCLHLAGFLPLLWLFWAINHGGLSADPVKDIQHFTGRTALKFLLATLLVSPLARYAKQPLLIRTRRLLGLWCFVWATLHLTSYALLELGIHNLALLGSELISRPYLTLGIISWLVLLALTLTSTQFAQRKLGKRWQTLHNVVYLVAILAPIHYLWSVKILSPQPVIYAALALALLALRYRKFRQWWR</sequence>
<comment type="function">
    <text evidence="1">Part of the MsrPQ system that repairs oxidized periplasmic proteins containing methionine sulfoxide residues (Met-O), using respiratory chain electrons. Thus protects these proteins from oxidative-stress damage caused by reactive species of oxygen and chlorine generated by the host defense mechanisms. MsrPQ is essential for the maintenance of envelope integrity under bleach stress, rescuing a wide series of structurally unrelated periplasmic proteins from methionine oxidation, including the primary periplasmic chaperone SurA and the lipoprotein Pal. MsrQ provides electrons for reduction to the reductase catalytic subunit MsrP, using the quinone pool of the respiratory chain.</text>
</comment>
<comment type="cofactor">
    <cofactor evidence="1">
        <name>FMN</name>
        <dbReference type="ChEBI" id="CHEBI:58210"/>
    </cofactor>
    <text evidence="1">Binds 1 FMN per subunit.</text>
</comment>
<comment type="cofactor">
    <cofactor evidence="1">
        <name>heme b</name>
        <dbReference type="ChEBI" id="CHEBI:60344"/>
    </cofactor>
    <text evidence="1">Binds 1 heme b (iron(II)-protoporphyrin IX) group per subunit.</text>
</comment>
<comment type="subunit">
    <text evidence="1">Heterodimer of a catalytic subunit (MsrP) and a heme-binding subunit (MsrQ).</text>
</comment>
<comment type="subcellular location">
    <subcellularLocation>
        <location evidence="1">Cell inner membrane</location>
        <topology evidence="1">Multi-pass membrane protein</topology>
    </subcellularLocation>
</comment>
<comment type="similarity">
    <text evidence="1">Belongs to the MsrQ family.</text>
</comment>
<proteinExistence type="inferred from homology"/>
<dbReference type="EMBL" id="CP001120">
    <property type="protein sequence ID" value="ACF68420.1"/>
    <property type="molecule type" value="Genomic_DNA"/>
</dbReference>
<dbReference type="RefSeq" id="WP_001240053.1">
    <property type="nucleotide sequence ID" value="NC_011083.1"/>
</dbReference>
<dbReference type="SMR" id="B4TJV2"/>
<dbReference type="KEGG" id="seh:SeHA_C3676"/>
<dbReference type="HOGENOM" id="CLU_080662_1_0_6"/>
<dbReference type="Proteomes" id="UP000001866">
    <property type="component" value="Chromosome"/>
</dbReference>
<dbReference type="GO" id="GO:0005886">
    <property type="term" value="C:plasma membrane"/>
    <property type="evidence" value="ECO:0007669"/>
    <property type="project" value="UniProtKB-SubCell"/>
</dbReference>
<dbReference type="GO" id="GO:0009055">
    <property type="term" value="F:electron transfer activity"/>
    <property type="evidence" value="ECO:0007669"/>
    <property type="project" value="UniProtKB-UniRule"/>
</dbReference>
<dbReference type="GO" id="GO:0010181">
    <property type="term" value="F:FMN binding"/>
    <property type="evidence" value="ECO:0007669"/>
    <property type="project" value="UniProtKB-UniRule"/>
</dbReference>
<dbReference type="GO" id="GO:0020037">
    <property type="term" value="F:heme binding"/>
    <property type="evidence" value="ECO:0007669"/>
    <property type="project" value="UniProtKB-UniRule"/>
</dbReference>
<dbReference type="GO" id="GO:0046872">
    <property type="term" value="F:metal ion binding"/>
    <property type="evidence" value="ECO:0007669"/>
    <property type="project" value="UniProtKB-KW"/>
</dbReference>
<dbReference type="GO" id="GO:0016679">
    <property type="term" value="F:oxidoreductase activity, acting on diphenols and related substances as donors"/>
    <property type="evidence" value="ECO:0007669"/>
    <property type="project" value="TreeGrafter"/>
</dbReference>
<dbReference type="GO" id="GO:0030091">
    <property type="term" value="P:protein repair"/>
    <property type="evidence" value="ECO:0007669"/>
    <property type="project" value="UniProtKB-UniRule"/>
</dbReference>
<dbReference type="HAMAP" id="MF_01207">
    <property type="entry name" value="MsrQ"/>
    <property type="match status" value="1"/>
</dbReference>
<dbReference type="InterPro" id="IPR013130">
    <property type="entry name" value="Fe3_Rdtase_TM_dom"/>
</dbReference>
<dbReference type="InterPro" id="IPR022837">
    <property type="entry name" value="MsrQ-like"/>
</dbReference>
<dbReference type="NCBIfam" id="NF003831">
    <property type="entry name" value="PRK05419.1-2"/>
    <property type="match status" value="1"/>
</dbReference>
<dbReference type="NCBIfam" id="NF003832">
    <property type="entry name" value="PRK05419.1-4"/>
    <property type="match status" value="1"/>
</dbReference>
<dbReference type="PANTHER" id="PTHR36964">
    <property type="entry name" value="PROTEIN-METHIONINE-SULFOXIDE REDUCTASE HEME-BINDING SUBUNIT MSRQ"/>
    <property type="match status" value="1"/>
</dbReference>
<dbReference type="PANTHER" id="PTHR36964:SF1">
    <property type="entry name" value="PROTEIN-METHIONINE-SULFOXIDE REDUCTASE HEME-BINDING SUBUNIT MSRQ"/>
    <property type="match status" value="1"/>
</dbReference>
<dbReference type="Pfam" id="PF01794">
    <property type="entry name" value="Ferric_reduct"/>
    <property type="match status" value="1"/>
</dbReference>
<name>MSRQ_SALHS</name>
<protein>
    <recommendedName>
        <fullName evidence="1">Protein-methionine-sulfoxide reductase heme-binding subunit MsrQ</fullName>
    </recommendedName>
    <alternativeName>
        <fullName evidence="1">Flavocytochrome MsrQ</fullName>
    </alternativeName>
</protein>
<gene>
    <name evidence="1" type="primary">msrQ</name>
    <name type="ordered locus">SeHA_C3676</name>
</gene>
<keyword id="KW-0997">Cell inner membrane</keyword>
<keyword id="KW-1003">Cell membrane</keyword>
<keyword id="KW-0249">Electron transport</keyword>
<keyword id="KW-0285">Flavoprotein</keyword>
<keyword id="KW-0288">FMN</keyword>
<keyword id="KW-0349">Heme</keyword>
<keyword id="KW-0408">Iron</keyword>
<keyword id="KW-0472">Membrane</keyword>
<keyword id="KW-0479">Metal-binding</keyword>
<keyword id="KW-0812">Transmembrane</keyword>
<keyword id="KW-1133">Transmembrane helix</keyword>
<keyword id="KW-0813">Transport</keyword>